<accession>B4TT06</accession>
<keyword id="KW-0067">ATP-binding</keyword>
<keyword id="KW-0963">Cytoplasm</keyword>
<keyword id="KW-0227">DNA damage</keyword>
<keyword id="KW-0233">DNA recombination</keyword>
<keyword id="KW-0234">DNA repair</keyword>
<keyword id="KW-0238">DNA-binding</keyword>
<keyword id="KW-0547">Nucleotide-binding</keyword>
<keyword id="KW-0742">SOS response</keyword>
<sequence length="353" mass="37944">MAIDENKQKALAAALGQIEKQFGKGSIMRLGEDRSMDVETISTGSLSLDIALGAGGLPMGRIVEIYGPESSGKTTLTLQVIAAAQREGKTCAFIDAEHALDPVYARKLGVDIDNLLCSQPDTGEQALEICDALARSGAVDVIVVDSVAALTPKAEIEGEIGDSHMGLAARMMSQAMRKLAGNLKQSNTLLIFINQIRMKIGVMFGNPETTTGGNALKFYASVRLDIRRIGAVKEGDNVVGSETRVKVVKNKIAAPFKQAEFQILYGEGINFYGELVDLGVKEKLIEKAGAWYSYNGEKIGQGKANATTWLKENPATAKEIEKRVRELLLSNQNATPDFAVDDSEGVAETNEDF</sequence>
<reference key="1">
    <citation type="journal article" date="2011" name="J. Bacteriol.">
        <title>Comparative genomics of 28 Salmonella enterica isolates: evidence for CRISPR-mediated adaptive sublineage evolution.</title>
        <authorList>
            <person name="Fricke W.F."/>
            <person name="Mammel M.K."/>
            <person name="McDermott P.F."/>
            <person name="Tartera C."/>
            <person name="White D.G."/>
            <person name="Leclerc J.E."/>
            <person name="Ravel J."/>
            <person name="Cebula T.A."/>
        </authorList>
    </citation>
    <scope>NUCLEOTIDE SEQUENCE [LARGE SCALE GENOMIC DNA]</scope>
    <source>
        <strain>CVM19633</strain>
    </source>
</reference>
<feature type="chain" id="PRO_1000114367" description="Protein RecA">
    <location>
        <begin position="1"/>
        <end position="353"/>
    </location>
</feature>
<feature type="binding site" evidence="1">
    <location>
        <begin position="67"/>
        <end position="74"/>
    </location>
    <ligand>
        <name>ATP</name>
        <dbReference type="ChEBI" id="CHEBI:30616"/>
    </ligand>
</feature>
<evidence type="ECO:0000255" key="1">
    <source>
        <dbReference type="HAMAP-Rule" id="MF_00268"/>
    </source>
</evidence>
<gene>
    <name evidence="1" type="primary">recA</name>
    <name type="ordered locus">SeSA_A2980</name>
</gene>
<dbReference type="EMBL" id="CP001127">
    <property type="protein sequence ID" value="ACF91431.1"/>
    <property type="molecule type" value="Genomic_DNA"/>
</dbReference>
<dbReference type="RefSeq" id="WP_000963150.1">
    <property type="nucleotide sequence ID" value="NC_011094.1"/>
</dbReference>
<dbReference type="SMR" id="B4TT06"/>
<dbReference type="KEGG" id="sew:SeSA_A2980"/>
<dbReference type="HOGENOM" id="CLU_040469_3_2_6"/>
<dbReference type="Proteomes" id="UP000001865">
    <property type="component" value="Chromosome"/>
</dbReference>
<dbReference type="GO" id="GO:0005829">
    <property type="term" value="C:cytosol"/>
    <property type="evidence" value="ECO:0007669"/>
    <property type="project" value="TreeGrafter"/>
</dbReference>
<dbReference type="GO" id="GO:0005524">
    <property type="term" value="F:ATP binding"/>
    <property type="evidence" value="ECO:0007669"/>
    <property type="project" value="UniProtKB-UniRule"/>
</dbReference>
<dbReference type="GO" id="GO:0016887">
    <property type="term" value="F:ATP hydrolysis activity"/>
    <property type="evidence" value="ECO:0007669"/>
    <property type="project" value="InterPro"/>
</dbReference>
<dbReference type="GO" id="GO:0140664">
    <property type="term" value="F:ATP-dependent DNA damage sensor activity"/>
    <property type="evidence" value="ECO:0007669"/>
    <property type="project" value="InterPro"/>
</dbReference>
<dbReference type="GO" id="GO:0003684">
    <property type="term" value="F:damaged DNA binding"/>
    <property type="evidence" value="ECO:0007669"/>
    <property type="project" value="UniProtKB-UniRule"/>
</dbReference>
<dbReference type="GO" id="GO:0003697">
    <property type="term" value="F:single-stranded DNA binding"/>
    <property type="evidence" value="ECO:0007669"/>
    <property type="project" value="UniProtKB-UniRule"/>
</dbReference>
<dbReference type="GO" id="GO:0006310">
    <property type="term" value="P:DNA recombination"/>
    <property type="evidence" value="ECO:0007669"/>
    <property type="project" value="UniProtKB-UniRule"/>
</dbReference>
<dbReference type="GO" id="GO:0006281">
    <property type="term" value="P:DNA repair"/>
    <property type="evidence" value="ECO:0007669"/>
    <property type="project" value="UniProtKB-UniRule"/>
</dbReference>
<dbReference type="GO" id="GO:0009432">
    <property type="term" value="P:SOS response"/>
    <property type="evidence" value="ECO:0007669"/>
    <property type="project" value="UniProtKB-UniRule"/>
</dbReference>
<dbReference type="CDD" id="cd00983">
    <property type="entry name" value="RecA"/>
    <property type="match status" value="1"/>
</dbReference>
<dbReference type="FunFam" id="3.40.50.300:FF:000087">
    <property type="entry name" value="Recombinase RecA"/>
    <property type="match status" value="1"/>
</dbReference>
<dbReference type="Gene3D" id="3.40.50.300">
    <property type="entry name" value="P-loop containing nucleotide triphosphate hydrolases"/>
    <property type="match status" value="1"/>
</dbReference>
<dbReference type="HAMAP" id="MF_00268">
    <property type="entry name" value="RecA"/>
    <property type="match status" value="1"/>
</dbReference>
<dbReference type="InterPro" id="IPR003593">
    <property type="entry name" value="AAA+_ATPase"/>
</dbReference>
<dbReference type="InterPro" id="IPR013765">
    <property type="entry name" value="DNA_recomb/repair_RecA"/>
</dbReference>
<dbReference type="InterPro" id="IPR020584">
    <property type="entry name" value="DNA_recomb/repair_RecA_CS"/>
</dbReference>
<dbReference type="InterPro" id="IPR027417">
    <property type="entry name" value="P-loop_NTPase"/>
</dbReference>
<dbReference type="InterPro" id="IPR049261">
    <property type="entry name" value="RecA-like_C"/>
</dbReference>
<dbReference type="InterPro" id="IPR049428">
    <property type="entry name" value="RecA-like_N"/>
</dbReference>
<dbReference type="InterPro" id="IPR020588">
    <property type="entry name" value="RecA_ATP-bd"/>
</dbReference>
<dbReference type="InterPro" id="IPR023400">
    <property type="entry name" value="RecA_C_sf"/>
</dbReference>
<dbReference type="InterPro" id="IPR020587">
    <property type="entry name" value="RecA_monomer-monomer_interface"/>
</dbReference>
<dbReference type="NCBIfam" id="TIGR02012">
    <property type="entry name" value="tigrfam_recA"/>
    <property type="match status" value="1"/>
</dbReference>
<dbReference type="PANTHER" id="PTHR45900:SF1">
    <property type="entry name" value="MITOCHONDRIAL DNA REPAIR PROTEIN RECA HOMOLOG-RELATED"/>
    <property type="match status" value="1"/>
</dbReference>
<dbReference type="PANTHER" id="PTHR45900">
    <property type="entry name" value="RECA"/>
    <property type="match status" value="1"/>
</dbReference>
<dbReference type="Pfam" id="PF00154">
    <property type="entry name" value="RecA"/>
    <property type="match status" value="1"/>
</dbReference>
<dbReference type="Pfam" id="PF21096">
    <property type="entry name" value="RecA_C"/>
    <property type="match status" value="1"/>
</dbReference>
<dbReference type="PRINTS" id="PR00142">
    <property type="entry name" value="RECA"/>
</dbReference>
<dbReference type="SMART" id="SM00382">
    <property type="entry name" value="AAA"/>
    <property type="match status" value="1"/>
</dbReference>
<dbReference type="SUPFAM" id="SSF52540">
    <property type="entry name" value="P-loop containing nucleoside triphosphate hydrolases"/>
    <property type="match status" value="1"/>
</dbReference>
<dbReference type="SUPFAM" id="SSF54752">
    <property type="entry name" value="RecA protein, C-terminal domain"/>
    <property type="match status" value="1"/>
</dbReference>
<dbReference type="PROSITE" id="PS00321">
    <property type="entry name" value="RECA_1"/>
    <property type="match status" value="1"/>
</dbReference>
<dbReference type="PROSITE" id="PS50162">
    <property type="entry name" value="RECA_2"/>
    <property type="match status" value="1"/>
</dbReference>
<dbReference type="PROSITE" id="PS50163">
    <property type="entry name" value="RECA_3"/>
    <property type="match status" value="1"/>
</dbReference>
<name>RECA_SALSV</name>
<organism>
    <name type="scientific">Salmonella schwarzengrund (strain CVM19633)</name>
    <dbReference type="NCBI Taxonomy" id="439843"/>
    <lineage>
        <taxon>Bacteria</taxon>
        <taxon>Pseudomonadati</taxon>
        <taxon>Pseudomonadota</taxon>
        <taxon>Gammaproteobacteria</taxon>
        <taxon>Enterobacterales</taxon>
        <taxon>Enterobacteriaceae</taxon>
        <taxon>Salmonella</taxon>
    </lineage>
</organism>
<comment type="function">
    <text evidence="1">Can catalyze the hydrolysis of ATP in the presence of single-stranded DNA, the ATP-dependent uptake of single-stranded DNA by duplex DNA, and the ATP-dependent hybridization of homologous single-stranded DNAs. It interacts with LexA causing its activation and leading to its autocatalytic cleavage.</text>
</comment>
<comment type="subcellular location">
    <subcellularLocation>
        <location evidence="1">Cytoplasm</location>
    </subcellularLocation>
</comment>
<comment type="similarity">
    <text evidence="1">Belongs to the RecA family.</text>
</comment>
<protein>
    <recommendedName>
        <fullName evidence="1">Protein RecA</fullName>
    </recommendedName>
    <alternativeName>
        <fullName evidence="1">Recombinase A</fullName>
    </alternativeName>
</protein>
<proteinExistence type="inferred from homology"/>